<organism>
    <name type="scientific">Rickettsia felis (strain ATCC VR-1525 / URRWXCal2)</name>
    <name type="common">Rickettsia azadi</name>
    <dbReference type="NCBI Taxonomy" id="315456"/>
    <lineage>
        <taxon>Bacteria</taxon>
        <taxon>Pseudomonadati</taxon>
        <taxon>Pseudomonadota</taxon>
        <taxon>Alphaproteobacteria</taxon>
        <taxon>Rickettsiales</taxon>
        <taxon>Rickettsiaceae</taxon>
        <taxon>Rickettsieae</taxon>
        <taxon>Rickettsia</taxon>
        <taxon>spotted fever group</taxon>
    </lineage>
</organism>
<protein>
    <recommendedName>
        <fullName>Putative ankyrin repeat protein RF_p14</fullName>
    </recommendedName>
</protein>
<proteinExistence type="predicted"/>
<reference key="1">
    <citation type="journal article" date="2005" name="PLoS Biol.">
        <title>The genome sequence of Rickettsia felis identifies the first putative conjugative plasmid in an obligate intracellular parasite.</title>
        <authorList>
            <person name="Ogata H."/>
            <person name="Renesto P."/>
            <person name="Audic S."/>
            <person name="Robert C."/>
            <person name="Blanc G."/>
            <person name="Fournier P.-E."/>
            <person name="Parinello H."/>
            <person name="Claverie J.-M."/>
            <person name="Raoult D."/>
        </authorList>
    </citation>
    <scope>NUCLEOTIDE SEQUENCE [LARGE SCALE GENOMIC DNA]</scope>
    <source>
        <strain>ATCC VR-1525 / URRWXCal2</strain>
    </source>
</reference>
<geneLocation type="plasmid">
    <name>pRF</name>
</geneLocation>
<dbReference type="EMBL" id="CP000054">
    <property type="protein sequence ID" value="AAY62265.1"/>
    <property type="molecule type" value="Genomic_DNA"/>
</dbReference>
<dbReference type="SMR" id="Q4UJJ2"/>
<dbReference type="KEGG" id="rfe:RF_p14"/>
<dbReference type="HOGENOM" id="CLU_2828440_0_0_5"/>
<dbReference type="OrthoDB" id="8960888at2"/>
<dbReference type="Proteomes" id="UP000008548">
    <property type="component" value="Plasmid pRF"/>
</dbReference>
<dbReference type="Gene3D" id="1.25.40.20">
    <property type="entry name" value="Ankyrin repeat-containing domain"/>
    <property type="match status" value="1"/>
</dbReference>
<dbReference type="InterPro" id="IPR002110">
    <property type="entry name" value="Ankyrin_rpt"/>
</dbReference>
<dbReference type="InterPro" id="IPR036770">
    <property type="entry name" value="Ankyrin_rpt-contain_sf"/>
</dbReference>
<dbReference type="Pfam" id="PF13637">
    <property type="entry name" value="Ank_4"/>
    <property type="match status" value="1"/>
</dbReference>
<dbReference type="SUPFAM" id="SSF48403">
    <property type="entry name" value="Ankyrin repeat"/>
    <property type="match status" value="1"/>
</dbReference>
<dbReference type="PROSITE" id="PS50297">
    <property type="entry name" value="ANK_REP_REGION"/>
    <property type="match status" value="1"/>
</dbReference>
<feature type="chain" id="PRO_0000281764" description="Putative ankyrin repeat protein RF_p14">
    <location>
        <begin position="1"/>
        <end position="63"/>
    </location>
</feature>
<feature type="repeat" description="ANK 1">
    <location>
        <begin position="11"/>
        <end position="43"/>
    </location>
</feature>
<feature type="repeat" description="ANK 2">
    <location>
        <begin position="44"/>
        <end position="63"/>
    </location>
</feature>
<accession>Q4UJJ2</accession>
<name>Y2014_RICFE</name>
<gene>
    <name type="ordered locus">RF_p14</name>
</gene>
<sequence length="63" mass="6891">MVSMKQVERQKLNQKLMRAAATGDIEAVQKLVLRGADIYCRDHQGDTALSLAAGSGYLDILDI</sequence>
<keyword id="KW-0040">ANK repeat</keyword>
<keyword id="KW-0614">Plasmid</keyword>
<keyword id="KW-0677">Repeat</keyword>